<proteinExistence type="evidence at protein level"/>
<sequence>MRLPIRFPKYVLYGMASAVWSILFLHILVGDTMSAADALSWSGGLIHSPAHRVNVMRSHHHEMGKELEQQHGAEEQQMQRDTKPAAFSNPPHLATGRGPSFVHADGQLDVSCFPHDKNIGSRTTEVAVVQVSSVQDCMKQCQSRPTCSHFTYNKNSKACHLKDGAPVFYTYNGDMTGPRSCDYSCTDNCWMNSETAVKALDYSGHGPGLCWAACKGTAGCIMYTFKGSTCTLYAKDSFNKS</sequence>
<organism>
    <name type="scientific">Sarcocystis muris</name>
    <dbReference type="NCBI Taxonomy" id="5813"/>
    <lineage>
        <taxon>Eukaryota</taxon>
        <taxon>Sar</taxon>
        <taxon>Alveolata</taxon>
        <taxon>Apicomplexa</taxon>
        <taxon>Conoidasida</taxon>
        <taxon>Coccidia</taxon>
        <taxon>Eucoccidiorida</taxon>
        <taxon>Eimeriorina</taxon>
        <taxon>Sarcocystidae</taxon>
        <taxon>Sarcocystis</taxon>
    </lineage>
</organism>
<protein>
    <recommendedName>
        <fullName>Microneme antigen</fullName>
    </recommendedName>
    <alternativeName>
        <fullName>Lectin SML3</fullName>
    </alternativeName>
</protein>
<keyword id="KW-0130">Cell adhesion</keyword>
<keyword id="KW-0968">Cytoplasmic vesicle</keyword>
<keyword id="KW-0903">Direct protein sequencing</keyword>
<keyword id="KW-1015">Disulfide bond</keyword>
<keyword id="KW-0430">Lectin</keyword>
<keyword id="KW-0677">Repeat</keyword>
<keyword id="KW-0732">Signal</keyword>
<evidence type="ECO:0000250" key="1"/>
<evidence type="ECO:0000255" key="2"/>
<evidence type="ECO:0000255" key="3">
    <source>
        <dbReference type="PROSITE-ProRule" id="PRU00315"/>
    </source>
</evidence>
<evidence type="ECO:0000256" key="4">
    <source>
        <dbReference type="SAM" id="MobiDB-lite"/>
    </source>
</evidence>
<evidence type="ECO:0000269" key="5">
    <source>
    </source>
</evidence>
<evidence type="ECO:0000305" key="6"/>
<feature type="signal peptide" evidence="2">
    <location>
        <begin position="1"/>
        <end position="34"/>
    </location>
</feature>
<feature type="propeptide" id="PRO_0000021722" evidence="5">
    <location>
        <begin position="35"/>
        <end position="103"/>
    </location>
</feature>
<feature type="chain" id="PRO_0000021723" description="Microneme antigen">
    <location>
        <begin position="104"/>
        <end position="241"/>
    </location>
</feature>
<feature type="domain" description="PAN 1" evidence="3">
    <location>
        <begin position="112"/>
        <end position="181"/>
    </location>
</feature>
<feature type="domain" description="PAN 2" evidence="3">
    <location>
        <begin position="185"/>
        <end position="241"/>
    </location>
</feature>
<feature type="region of interest" description="Disordered" evidence="4">
    <location>
        <begin position="61"/>
        <end position="92"/>
    </location>
</feature>
<feature type="compositionally biased region" description="Basic and acidic residues" evidence="4">
    <location>
        <begin position="61"/>
        <end position="83"/>
    </location>
</feature>
<feature type="binding site" evidence="1">
    <location>
        <position position="121"/>
    </location>
    <ligand>
        <name>a carbohydrate</name>
        <dbReference type="ChEBI" id="CHEBI:16646"/>
    </ligand>
</feature>
<feature type="binding site" evidence="1">
    <location>
        <position position="162"/>
    </location>
    <ligand>
        <name>a carbohydrate</name>
        <dbReference type="ChEBI" id="CHEBI:16646"/>
    </ligand>
</feature>
<feature type="binding site" evidence="1">
    <location>
        <position position="169"/>
    </location>
    <ligand>
        <name>a carbohydrate</name>
        <dbReference type="ChEBI" id="CHEBI:16646"/>
    </ligand>
</feature>
<feature type="binding site" evidence="1">
    <location>
        <position position="174"/>
    </location>
    <ligand>
        <name>a carbohydrate</name>
        <dbReference type="ChEBI" id="CHEBI:16646"/>
    </ligand>
</feature>
<feature type="disulfide bond" evidence="3">
    <location>
        <begin position="112"/>
        <end position="181"/>
    </location>
</feature>
<feature type="disulfide bond" evidence="3">
    <location>
        <begin position="137"/>
        <end position="159"/>
    </location>
</feature>
<feature type="disulfide bond" evidence="3">
    <location>
        <begin position="141"/>
        <end position="147"/>
    </location>
</feature>
<feature type="disulfide bond" evidence="3">
    <location>
        <begin position="185"/>
        <end position="189"/>
    </location>
</feature>
<feature type="disulfide bond" evidence="3">
    <location>
        <begin position="210"/>
        <end position="230"/>
    </location>
</feature>
<feature type="disulfide bond" evidence="3">
    <location>
        <begin position="214"/>
        <end position="220"/>
    </location>
</feature>
<reference key="1">
    <citation type="journal article" date="1996" name="Parasitol. Res.">
        <title>Characterization of genomic clones encoding two microneme antigens of Sarcocystis muris (Apicomplexa).</title>
        <authorList>
            <person name="Klein H."/>
            <person name="Mehlhorn H."/>
            <person name="Rueger W."/>
        </authorList>
    </citation>
    <scope>NUCLEOTIDE SEQUENCE [GENOMIC DNA]</scope>
    <scope>PROTEIN SEQUENCE OF 104-126</scope>
</reference>
<comment type="function">
    <text>Galactose-binding lectin. Plays a role in adhesion to the host cell. Has a potential role in invasion of host cells.</text>
</comment>
<comment type="subunit">
    <text>Homodimer or heterodimer of major microneme antigen and microneme antigen.</text>
</comment>
<comment type="subcellular location">
    <subcellularLocation>
        <location>Cytoplasmic vesicle</location>
        <location>Secretory vesicle</location>
        <location>Microneme</location>
    </subcellularLocation>
</comment>
<comment type="developmental stage">
    <text>Cyst merozoites.</text>
</comment>
<comment type="PTM">
    <text evidence="1">Contains six disulfide bonds.</text>
</comment>
<comment type="similarity">
    <text evidence="6">Belongs to the microneme antigen family.</text>
</comment>
<accession>Q26539</accession>
<dbReference type="EMBL" id="U21964">
    <property type="protein sequence ID" value="AAB18146.1"/>
    <property type="molecule type" value="Genomic_DNA"/>
</dbReference>
<dbReference type="SMR" id="Q26539"/>
<dbReference type="GO" id="GO:0031410">
    <property type="term" value="C:cytoplasmic vesicle"/>
    <property type="evidence" value="ECO:0007669"/>
    <property type="project" value="UniProtKB-KW"/>
</dbReference>
<dbReference type="GO" id="GO:0005576">
    <property type="term" value="C:extracellular region"/>
    <property type="evidence" value="ECO:0007669"/>
    <property type="project" value="InterPro"/>
</dbReference>
<dbReference type="GO" id="GO:0020009">
    <property type="term" value="C:microneme"/>
    <property type="evidence" value="ECO:0007669"/>
    <property type="project" value="UniProtKB-SubCell"/>
</dbReference>
<dbReference type="GO" id="GO:0030246">
    <property type="term" value="F:carbohydrate binding"/>
    <property type="evidence" value="ECO:0007669"/>
    <property type="project" value="UniProtKB-KW"/>
</dbReference>
<dbReference type="GO" id="GO:0007155">
    <property type="term" value="P:cell adhesion"/>
    <property type="evidence" value="ECO:0007669"/>
    <property type="project" value="UniProtKB-KW"/>
</dbReference>
<dbReference type="GO" id="GO:0006508">
    <property type="term" value="P:proteolysis"/>
    <property type="evidence" value="ECO:0007669"/>
    <property type="project" value="InterPro"/>
</dbReference>
<dbReference type="CDD" id="cd01100">
    <property type="entry name" value="APPLE_Factor_XI_like"/>
    <property type="match status" value="1"/>
</dbReference>
<dbReference type="Gene3D" id="3.30.30.180">
    <property type="match status" value="1"/>
</dbReference>
<dbReference type="Gene3D" id="3.50.4.10">
    <property type="entry name" value="Hepatocyte Growth Factor"/>
    <property type="match status" value="1"/>
</dbReference>
<dbReference type="InterPro" id="IPR000177">
    <property type="entry name" value="Apple"/>
</dbReference>
<dbReference type="InterPro" id="IPR003609">
    <property type="entry name" value="Pan_app"/>
</dbReference>
<dbReference type="Pfam" id="PF00024">
    <property type="entry name" value="PAN_1"/>
    <property type="match status" value="1"/>
</dbReference>
<dbReference type="Pfam" id="PF14295">
    <property type="entry name" value="PAN_4"/>
    <property type="match status" value="1"/>
</dbReference>
<dbReference type="SMART" id="SM00223">
    <property type="entry name" value="APPLE"/>
    <property type="match status" value="1"/>
</dbReference>
<dbReference type="SMART" id="SM00473">
    <property type="entry name" value="PAN_AP"/>
    <property type="match status" value="1"/>
</dbReference>
<dbReference type="SUPFAM" id="SSF57414">
    <property type="entry name" value="Hairpin loop containing domain-like"/>
    <property type="match status" value="1"/>
</dbReference>
<dbReference type="PROSITE" id="PS50948">
    <property type="entry name" value="PAN"/>
    <property type="match status" value="2"/>
</dbReference>
<name>MIA1_SARMU</name>